<dbReference type="EC" id="2.4.2.21" evidence="1"/>
<dbReference type="EMBL" id="AM260479">
    <property type="protein sequence ID" value="CAJ94044.1"/>
    <property type="molecule type" value="Genomic_DNA"/>
</dbReference>
<dbReference type="RefSeq" id="WP_010814915.1">
    <property type="nucleotide sequence ID" value="NZ_CP039287.1"/>
</dbReference>
<dbReference type="SMR" id="Q0K7H7"/>
<dbReference type="STRING" id="381666.H16_A2968"/>
<dbReference type="KEGG" id="reh:H16_A2968"/>
<dbReference type="eggNOG" id="COG2038">
    <property type="taxonomic scope" value="Bacteria"/>
</dbReference>
<dbReference type="HOGENOM" id="CLU_002982_0_0_4"/>
<dbReference type="OrthoDB" id="9781491at2"/>
<dbReference type="UniPathway" id="UPA00061">
    <property type="reaction ID" value="UER00516"/>
</dbReference>
<dbReference type="Proteomes" id="UP000008210">
    <property type="component" value="Chromosome 1"/>
</dbReference>
<dbReference type="GO" id="GO:0008939">
    <property type="term" value="F:nicotinate-nucleotide-dimethylbenzimidazole phosphoribosyltransferase activity"/>
    <property type="evidence" value="ECO:0007669"/>
    <property type="project" value="UniProtKB-UniRule"/>
</dbReference>
<dbReference type="GO" id="GO:0009236">
    <property type="term" value="P:cobalamin biosynthetic process"/>
    <property type="evidence" value="ECO:0007669"/>
    <property type="project" value="UniProtKB-KW"/>
</dbReference>
<dbReference type="CDD" id="cd02439">
    <property type="entry name" value="DMB-PRT_CobT"/>
    <property type="match status" value="1"/>
</dbReference>
<dbReference type="FunFam" id="3.40.50.10210:FF:000001">
    <property type="entry name" value="Nicotinate-nucleotide--dimethylbenzimidazole phosphoribosyltransferase"/>
    <property type="match status" value="1"/>
</dbReference>
<dbReference type="Gene3D" id="1.10.1610.10">
    <property type="match status" value="1"/>
</dbReference>
<dbReference type="Gene3D" id="3.40.50.10210">
    <property type="match status" value="1"/>
</dbReference>
<dbReference type="HAMAP" id="MF_00230">
    <property type="entry name" value="CobT"/>
    <property type="match status" value="1"/>
</dbReference>
<dbReference type="InterPro" id="IPR003200">
    <property type="entry name" value="Nict_dMeBzImd_PRibTrfase"/>
</dbReference>
<dbReference type="InterPro" id="IPR017846">
    <property type="entry name" value="Nict_dMeBzImd_PRibTrfase_bact"/>
</dbReference>
<dbReference type="InterPro" id="IPR023195">
    <property type="entry name" value="Nict_dMeBzImd_PRibTrfase_N"/>
</dbReference>
<dbReference type="InterPro" id="IPR036087">
    <property type="entry name" value="Nict_dMeBzImd_PRibTrfase_sf"/>
</dbReference>
<dbReference type="NCBIfam" id="TIGR03160">
    <property type="entry name" value="cobT_DBIPRT"/>
    <property type="match status" value="1"/>
</dbReference>
<dbReference type="NCBIfam" id="NF000996">
    <property type="entry name" value="PRK00105.1"/>
    <property type="match status" value="1"/>
</dbReference>
<dbReference type="PANTHER" id="PTHR43463">
    <property type="entry name" value="NICOTINATE-NUCLEOTIDE--DIMETHYLBENZIMIDAZOLE PHOSPHORIBOSYLTRANSFERASE"/>
    <property type="match status" value="1"/>
</dbReference>
<dbReference type="PANTHER" id="PTHR43463:SF1">
    <property type="entry name" value="NICOTINATE-NUCLEOTIDE--DIMETHYLBENZIMIDAZOLE PHOSPHORIBOSYLTRANSFERASE"/>
    <property type="match status" value="1"/>
</dbReference>
<dbReference type="Pfam" id="PF02277">
    <property type="entry name" value="DBI_PRT"/>
    <property type="match status" value="1"/>
</dbReference>
<dbReference type="SUPFAM" id="SSF52733">
    <property type="entry name" value="Nicotinate mononucleotide:5,6-dimethylbenzimidazole phosphoribosyltransferase (CobT)"/>
    <property type="match status" value="1"/>
</dbReference>
<reference key="1">
    <citation type="journal article" date="2006" name="Nat. Biotechnol.">
        <title>Genome sequence of the bioplastic-producing 'Knallgas' bacterium Ralstonia eutropha H16.</title>
        <authorList>
            <person name="Pohlmann A."/>
            <person name="Fricke W.F."/>
            <person name="Reinecke F."/>
            <person name="Kusian B."/>
            <person name="Liesegang H."/>
            <person name="Cramm R."/>
            <person name="Eitinger T."/>
            <person name="Ewering C."/>
            <person name="Poetter M."/>
            <person name="Schwartz E."/>
            <person name="Strittmatter A."/>
            <person name="Voss I."/>
            <person name="Gottschalk G."/>
            <person name="Steinbuechel A."/>
            <person name="Friedrich B."/>
            <person name="Bowien B."/>
        </authorList>
    </citation>
    <scope>NUCLEOTIDE SEQUENCE [LARGE SCALE GENOMIC DNA]</scope>
    <source>
        <strain>ATCC 17699 / DSM 428 / KCTC 22496 / NCIMB 10442 / H16 / Stanier 337</strain>
    </source>
</reference>
<proteinExistence type="inferred from homology"/>
<name>COBT_CUPNH</name>
<evidence type="ECO:0000255" key="1">
    <source>
        <dbReference type="HAMAP-Rule" id="MF_00230"/>
    </source>
</evidence>
<protein>
    <recommendedName>
        <fullName evidence="1">Nicotinate-nucleotide--dimethylbenzimidazole phosphoribosyltransferase</fullName>
        <shortName evidence="1">NN:DBI PRT</shortName>
        <ecNumber evidence="1">2.4.2.21</ecNumber>
    </recommendedName>
    <alternativeName>
        <fullName evidence="1">N(1)-alpha-phosphoribosyltransferase</fullName>
    </alternativeName>
</protein>
<gene>
    <name evidence="1" type="primary">cobT</name>
    <name type="ordered locus">H16_A2968</name>
</gene>
<sequence length="346" mass="35702">MQFPEITPLDDALRPELQAAIDDKTKPLGALGRLESLALQLGLILGTARPVLQRPTVIVFAADHGVADAGVSAYPAEVTAQMVQNFLAGGAAINVFSRQHGIALEIVDAGVRAPLPAAPGLVNCRIADGTRNFAVEPAMTPEQAAAAMTAGMARVLRHAQQGCNVIGFGEMGIANTSAAACLMQRLTGLPLADCIGRGTGLDDAGLARKREVLERALALHADAQAPLDVLATFGGFEIAMMAGAFLAAAASRMVILVDGFIATAALLVAQRLDPNVLQYCVFTHCSHERGHRALLDQFGAAPLLALDLRLGEGTGAALAWPLLASAAAFLNEMATFSGAGVSTASP</sequence>
<comment type="function">
    <text evidence="1">Catalyzes the synthesis of alpha-ribazole-5'-phosphate from nicotinate mononucleotide (NAMN) and 5,6-dimethylbenzimidazole (DMB).</text>
</comment>
<comment type="catalytic activity">
    <reaction evidence="1">
        <text>5,6-dimethylbenzimidazole + nicotinate beta-D-ribonucleotide = alpha-ribazole 5'-phosphate + nicotinate + H(+)</text>
        <dbReference type="Rhea" id="RHEA:11196"/>
        <dbReference type="ChEBI" id="CHEBI:15378"/>
        <dbReference type="ChEBI" id="CHEBI:15890"/>
        <dbReference type="ChEBI" id="CHEBI:32544"/>
        <dbReference type="ChEBI" id="CHEBI:57502"/>
        <dbReference type="ChEBI" id="CHEBI:57918"/>
        <dbReference type="EC" id="2.4.2.21"/>
    </reaction>
</comment>
<comment type="pathway">
    <text evidence="1">Nucleoside biosynthesis; alpha-ribazole biosynthesis; alpha-ribazole from 5,6-dimethylbenzimidazole: step 1/2.</text>
</comment>
<comment type="similarity">
    <text evidence="1">Belongs to the CobT family.</text>
</comment>
<keyword id="KW-0169">Cobalamin biosynthesis</keyword>
<keyword id="KW-0328">Glycosyltransferase</keyword>
<keyword id="KW-1185">Reference proteome</keyword>
<keyword id="KW-0808">Transferase</keyword>
<organism>
    <name type="scientific">Cupriavidus necator (strain ATCC 17699 / DSM 428 / KCTC 22496 / NCIMB 10442 / H16 / Stanier 337)</name>
    <name type="common">Ralstonia eutropha</name>
    <dbReference type="NCBI Taxonomy" id="381666"/>
    <lineage>
        <taxon>Bacteria</taxon>
        <taxon>Pseudomonadati</taxon>
        <taxon>Pseudomonadota</taxon>
        <taxon>Betaproteobacteria</taxon>
        <taxon>Burkholderiales</taxon>
        <taxon>Burkholderiaceae</taxon>
        <taxon>Cupriavidus</taxon>
    </lineage>
</organism>
<feature type="chain" id="PRO_1000058766" description="Nicotinate-nucleotide--dimethylbenzimidazole phosphoribosyltransferase">
    <location>
        <begin position="1"/>
        <end position="346"/>
    </location>
</feature>
<feature type="active site" description="Proton acceptor" evidence="1">
    <location>
        <position position="312"/>
    </location>
</feature>
<accession>Q0K7H7</accession>